<feature type="chain" id="PRO_0000293194" description="Small ribosomal subunit protein uS5">
    <location>
        <begin position="1"/>
        <end position="173"/>
    </location>
</feature>
<feature type="domain" description="S5 DRBM" evidence="1">
    <location>
        <begin position="16"/>
        <end position="79"/>
    </location>
</feature>
<dbReference type="EMBL" id="CP000235">
    <property type="protein sequence ID" value="ABD44017.1"/>
    <property type="molecule type" value="Genomic_DNA"/>
</dbReference>
<dbReference type="RefSeq" id="WP_011450432.1">
    <property type="nucleotide sequence ID" value="NC_007797.1"/>
</dbReference>
<dbReference type="SMR" id="Q2GL42"/>
<dbReference type="STRING" id="212042.APH_0297"/>
<dbReference type="PaxDb" id="212042-APH_0297"/>
<dbReference type="EnsemblBacteria" id="ABD44017">
    <property type="protein sequence ID" value="ABD44017"/>
    <property type="gene ID" value="APH_0297"/>
</dbReference>
<dbReference type="GeneID" id="92747506"/>
<dbReference type="KEGG" id="aph:APH_0297"/>
<dbReference type="eggNOG" id="COG0098">
    <property type="taxonomic scope" value="Bacteria"/>
</dbReference>
<dbReference type="HOGENOM" id="CLU_065898_2_2_5"/>
<dbReference type="Proteomes" id="UP000001943">
    <property type="component" value="Chromosome"/>
</dbReference>
<dbReference type="GO" id="GO:0015935">
    <property type="term" value="C:small ribosomal subunit"/>
    <property type="evidence" value="ECO:0007669"/>
    <property type="project" value="InterPro"/>
</dbReference>
<dbReference type="GO" id="GO:0019843">
    <property type="term" value="F:rRNA binding"/>
    <property type="evidence" value="ECO:0007669"/>
    <property type="project" value="UniProtKB-UniRule"/>
</dbReference>
<dbReference type="GO" id="GO:0003735">
    <property type="term" value="F:structural constituent of ribosome"/>
    <property type="evidence" value="ECO:0007669"/>
    <property type="project" value="InterPro"/>
</dbReference>
<dbReference type="GO" id="GO:0006412">
    <property type="term" value="P:translation"/>
    <property type="evidence" value="ECO:0007669"/>
    <property type="project" value="UniProtKB-UniRule"/>
</dbReference>
<dbReference type="FunFam" id="3.30.160.20:FF:000001">
    <property type="entry name" value="30S ribosomal protein S5"/>
    <property type="match status" value="1"/>
</dbReference>
<dbReference type="FunFam" id="3.30.230.10:FF:000002">
    <property type="entry name" value="30S ribosomal protein S5"/>
    <property type="match status" value="1"/>
</dbReference>
<dbReference type="Gene3D" id="3.30.160.20">
    <property type="match status" value="1"/>
</dbReference>
<dbReference type="Gene3D" id="3.30.230.10">
    <property type="match status" value="1"/>
</dbReference>
<dbReference type="HAMAP" id="MF_01307_B">
    <property type="entry name" value="Ribosomal_uS5_B"/>
    <property type="match status" value="1"/>
</dbReference>
<dbReference type="InterPro" id="IPR020568">
    <property type="entry name" value="Ribosomal_Su5_D2-typ_SF"/>
</dbReference>
<dbReference type="InterPro" id="IPR000851">
    <property type="entry name" value="Ribosomal_uS5"/>
</dbReference>
<dbReference type="InterPro" id="IPR005712">
    <property type="entry name" value="Ribosomal_uS5_bac-type"/>
</dbReference>
<dbReference type="InterPro" id="IPR005324">
    <property type="entry name" value="Ribosomal_uS5_C"/>
</dbReference>
<dbReference type="InterPro" id="IPR013810">
    <property type="entry name" value="Ribosomal_uS5_N"/>
</dbReference>
<dbReference type="InterPro" id="IPR014721">
    <property type="entry name" value="Ribsml_uS5_D2-typ_fold_subgr"/>
</dbReference>
<dbReference type="NCBIfam" id="TIGR01021">
    <property type="entry name" value="rpsE_bact"/>
    <property type="match status" value="1"/>
</dbReference>
<dbReference type="PANTHER" id="PTHR48277">
    <property type="entry name" value="MITOCHONDRIAL RIBOSOMAL PROTEIN S5"/>
    <property type="match status" value="1"/>
</dbReference>
<dbReference type="PANTHER" id="PTHR48277:SF1">
    <property type="entry name" value="MITOCHONDRIAL RIBOSOMAL PROTEIN S5"/>
    <property type="match status" value="1"/>
</dbReference>
<dbReference type="Pfam" id="PF00333">
    <property type="entry name" value="Ribosomal_S5"/>
    <property type="match status" value="1"/>
</dbReference>
<dbReference type="Pfam" id="PF03719">
    <property type="entry name" value="Ribosomal_S5_C"/>
    <property type="match status" value="1"/>
</dbReference>
<dbReference type="SUPFAM" id="SSF54768">
    <property type="entry name" value="dsRNA-binding domain-like"/>
    <property type="match status" value="1"/>
</dbReference>
<dbReference type="SUPFAM" id="SSF54211">
    <property type="entry name" value="Ribosomal protein S5 domain 2-like"/>
    <property type="match status" value="1"/>
</dbReference>
<dbReference type="PROSITE" id="PS50881">
    <property type="entry name" value="S5_DSRBD"/>
    <property type="match status" value="1"/>
</dbReference>
<name>RS5_ANAPZ</name>
<gene>
    <name evidence="1" type="primary">rpsE</name>
    <name type="ordered locus">APH_0297</name>
</gene>
<organism>
    <name type="scientific">Anaplasma phagocytophilum (strain HZ)</name>
    <dbReference type="NCBI Taxonomy" id="212042"/>
    <lineage>
        <taxon>Bacteria</taxon>
        <taxon>Pseudomonadati</taxon>
        <taxon>Pseudomonadota</taxon>
        <taxon>Alphaproteobacteria</taxon>
        <taxon>Rickettsiales</taxon>
        <taxon>Anaplasmataceae</taxon>
        <taxon>Anaplasma</taxon>
        <taxon>phagocytophilum group</taxon>
    </lineage>
</organism>
<evidence type="ECO:0000255" key="1">
    <source>
        <dbReference type="HAMAP-Rule" id="MF_01307"/>
    </source>
</evidence>
<evidence type="ECO:0000305" key="2"/>
<proteinExistence type="inferred from homology"/>
<comment type="function">
    <text evidence="1">With S4 and S12 plays an important role in translational accuracy.</text>
</comment>
<comment type="function">
    <text evidence="1">Located at the back of the 30S subunit body where it stabilizes the conformation of the head with respect to the body.</text>
</comment>
<comment type="subunit">
    <text evidence="1">Part of the 30S ribosomal subunit. Contacts proteins S4 and S8.</text>
</comment>
<comment type="domain">
    <text>The N-terminal domain interacts with the head of the 30S subunit; the C-terminal domain interacts with the body and contacts protein S4. The interaction surface between S4 and S5 is involved in control of translational fidelity.</text>
</comment>
<comment type="similarity">
    <text evidence="1">Belongs to the universal ribosomal protein uS5 family.</text>
</comment>
<reference key="1">
    <citation type="journal article" date="2006" name="PLoS Genet.">
        <title>Comparative genomics of emerging human ehrlichiosis agents.</title>
        <authorList>
            <person name="Dunning Hotopp J.C."/>
            <person name="Lin M."/>
            <person name="Madupu R."/>
            <person name="Crabtree J."/>
            <person name="Angiuoli S.V."/>
            <person name="Eisen J.A."/>
            <person name="Seshadri R."/>
            <person name="Ren Q."/>
            <person name="Wu M."/>
            <person name="Utterback T.R."/>
            <person name="Smith S."/>
            <person name="Lewis M."/>
            <person name="Khouri H."/>
            <person name="Zhang C."/>
            <person name="Niu H."/>
            <person name="Lin Q."/>
            <person name="Ohashi N."/>
            <person name="Zhi N."/>
            <person name="Nelson W.C."/>
            <person name="Brinkac L.M."/>
            <person name="Dodson R.J."/>
            <person name="Rosovitz M.J."/>
            <person name="Sundaram J.P."/>
            <person name="Daugherty S.C."/>
            <person name="Davidsen T."/>
            <person name="Durkin A.S."/>
            <person name="Gwinn M.L."/>
            <person name="Haft D.H."/>
            <person name="Selengut J.D."/>
            <person name="Sullivan S.A."/>
            <person name="Zafar N."/>
            <person name="Zhou L."/>
            <person name="Benahmed F."/>
            <person name="Forberger H."/>
            <person name="Halpin R."/>
            <person name="Mulligan S."/>
            <person name="Robinson J."/>
            <person name="White O."/>
            <person name="Rikihisa Y."/>
            <person name="Tettelin H."/>
        </authorList>
    </citation>
    <scope>NUCLEOTIDE SEQUENCE [LARGE SCALE GENOMIC DNA]</scope>
    <source>
        <strain>HZ</strain>
    </source>
</reference>
<sequence length="173" mass="18632">MSVDRKPRTSNDAHDLSELLVSVRRVSKVVKGGRRFSFSVLVVVGDEKGRVGCGMGKHAEVAEAKIKAVNAAKKNMIRVYLRESRTLHHDVTAKFCASRVILRSAKVGTGIIAGGSVRAVFEVLGVQDVVAKIVGSSNAHTVIYAVFSAFKSMLSPKQVAGKRGKKVCDVINR</sequence>
<accession>Q2GL42</accession>
<keyword id="KW-0687">Ribonucleoprotein</keyword>
<keyword id="KW-0689">Ribosomal protein</keyword>
<keyword id="KW-0694">RNA-binding</keyword>
<keyword id="KW-0699">rRNA-binding</keyword>
<protein>
    <recommendedName>
        <fullName evidence="1">Small ribosomal subunit protein uS5</fullName>
    </recommendedName>
    <alternativeName>
        <fullName evidence="2">30S ribosomal protein S5</fullName>
    </alternativeName>
</protein>